<dbReference type="EMBL" id="CP001047">
    <property type="protein sequence ID" value="ACF07178.1"/>
    <property type="molecule type" value="Genomic_DNA"/>
</dbReference>
<dbReference type="RefSeq" id="WP_012498135.1">
    <property type="nucleotide sequence ID" value="NC_011025.1"/>
</dbReference>
<dbReference type="SMR" id="B3PMC6"/>
<dbReference type="STRING" id="243272.MARTH_orf281"/>
<dbReference type="KEGG" id="mat:MARTH_orf281"/>
<dbReference type="eggNOG" id="COG0231">
    <property type="taxonomic scope" value="Bacteria"/>
</dbReference>
<dbReference type="HOGENOM" id="CLU_074944_2_1_14"/>
<dbReference type="UniPathway" id="UPA00345"/>
<dbReference type="Proteomes" id="UP000008812">
    <property type="component" value="Chromosome"/>
</dbReference>
<dbReference type="GO" id="GO:0005737">
    <property type="term" value="C:cytoplasm"/>
    <property type="evidence" value="ECO:0007669"/>
    <property type="project" value="UniProtKB-SubCell"/>
</dbReference>
<dbReference type="GO" id="GO:0003746">
    <property type="term" value="F:translation elongation factor activity"/>
    <property type="evidence" value="ECO:0007669"/>
    <property type="project" value="UniProtKB-UniRule"/>
</dbReference>
<dbReference type="GO" id="GO:0043043">
    <property type="term" value="P:peptide biosynthetic process"/>
    <property type="evidence" value="ECO:0007669"/>
    <property type="project" value="InterPro"/>
</dbReference>
<dbReference type="CDD" id="cd04470">
    <property type="entry name" value="S1_EF-P_repeat_1"/>
    <property type="match status" value="1"/>
</dbReference>
<dbReference type="FunFam" id="2.30.30.30:FF:000003">
    <property type="entry name" value="Elongation factor P"/>
    <property type="match status" value="1"/>
</dbReference>
<dbReference type="FunFam" id="2.40.50.140:FF:000004">
    <property type="entry name" value="Elongation factor P"/>
    <property type="match status" value="1"/>
</dbReference>
<dbReference type="FunFam" id="2.40.50.140:FF:000009">
    <property type="entry name" value="Elongation factor P"/>
    <property type="match status" value="1"/>
</dbReference>
<dbReference type="Gene3D" id="2.30.30.30">
    <property type="match status" value="1"/>
</dbReference>
<dbReference type="Gene3D" id="2.40.50.140">
    <property type="entry name" value="Nucleic acid-binding proteins"/>
    <property type="match status" value="2"/>
</dbReference>
<dbReference type="HAMAP" id="MF_00141">
    <property type="entry name" value="EF_P"/>
    <property type="match status" value="1"/>
</dbReference>
<dbReference type="InterPro" id="IPR015365">
    <property type="entry name" value="Elong-fact-P_C"/>
</dbReference>
<dbReference type="InterPro" id="IPR012340">
    <property type="entry name" value="NA-bd_OB-fold"/>
</dbReference>
<dbReference type="InterPro" id="IPR014722">
    <property type="entry name" value="Rib_uL2_dom2"/>
</dbReference>
<dbReference type="InterPro" id="IPR020599">
    <property type="entry name" value="Transl_elong_fac_P/YeiP"/>
</dbReference>
<dbReference type="InterPro" id="IPR013185">
    <property type="entry name" value="Transl_elong_KOW-like"/>
</dbReference>
<dbReference type="InterPro" id="IPR001059">
    <property type="entry name" value="Transl_elong_P/YeiP_cen"/>
</dbReference>
<dbReference type="InterPro" id="IPR011768">
    <property type="entry name" value="Transl_elongation_fac_P"/>
</dbReference>
<dbReference type="InterPro" id="IPR008991">
    <property type="entry name" value="Translation_prot_SH3-like_sf"/>
</dbReference>
<dbReference type="NCBIfam" id="TIGR00038">
    <property type="entry name" value="efp"/>
    <property type="match status" value="1"/>
</dbReference>
<dbReference type="NCBIfam" id="NF001810">
    <property type="entry name" value="PRK00529.1"/>
    <property type="match status" value="1"/>
</dbReference>
<dbReference type="PANTHER" id="PTHR30053">
    <property type="entry name" value="ELONGATION FACTOR P"/>
    <property type="match status" value="1"/>
</dbReference>
<dbReference type="PANTHER" id="PTHR30053:SF12">
    <property type="entry name" value="ELONGATION FACTOR P (EF-P) FAMILY PROTEIN"/>
    <property type="match status" value="1"/>
</dbReference>
<dbReference type="Pfam" id="PF01132">
    <property type="entry name" value="EFP"/>
    <property type="match status" value="1"/>
</dbReference>
<dbReference type="Pfam" id="PF08207">
    <property type="entry name" value="EFP_N"/>
    <property type="match status" value="1"/>
</dbReference>
<dbReference type="Pfam" id="PF09285">
    <property type="entry name" value="Elong-fact-P_C"/>
    <property type="match status" value="1"/>
</dbReference>
<dbReference type="PIRSF" id="PIRSF005901">
    <property type="entry name" value="EF-P"/>
    <property type="match status" value="1"/>
</dbReference>
<dbReference type="SMART" id="SM01185">
    <property type="entry name" value="EFP"/>
    <property type="match status" value="1"/>
</dbReference>
<dbReference type="SMART" id="SM00841">
    <property type="entry name" value="Elong-fact-P_C"/>
    <property type="match status" value="1"/>
</dbReference>
<dbReference type="SUPFAM" id="SSF50249">
    <property type="entry name" value="Nucleic acid-binding proteins"/>
    <property type="match status" value="2"/>
</dbReference>
<dbReference type="SUPFAM" id="SSF50104">
    <property type="entry name" value="Translation proteins SH3-like domain"/>
    <property type="match status" value="1"/>
</dbReference>
<sequence>MINVNDLKSGVTFQLEGAIYVVLEASHSKQGRGQANVKVKVKDLRTGSTTIRSFTGGEKVERAMIEKTNMDFLYNSGEAIVLMDQETFEQIEIPLNHVEWELNFLKEGQKVMVRKFQEEVLDIELPANVTLKVVSAPDAVKGNTAQAAQKKVTLETDFVVETPLFIKEGEEILVSTETGKYVGRA</sequence>
<keyword id="KW-0963">Cytoplasm</keyword>
<keyword id="KW-0251">Elongation factor</keyword>
<keyword id="KW-0648">Protein biosynthesis</keyword>
<keyword id="KW-1185">Reference proteome</keyword>
<protein>
    <recommendedName>
        <fullName evidence="1">Elongation factor P</fullName>
        <shortName evidence="1">EF-P</shortName>
    </recommendedName>
</protein>
<evidence type="ECO:0000255" key="1">
    <source>
        <dbReference type="HAMAP-Rule" id="MF_00141"/>
    </source>
</evidence>
<reference key="1">
    <citation type="journal article" date="2008" name="Infect. Immun.">
        <title>Genome of Mycoplasma arthritidis.</title>
        <authorList>
            <person name="Dybvig K."/>
            <person name="Zuhua C."/>
            <person name="Lao P."/>
            <person name="Jordan D.S."/>
            <person name="French C.T."/>
            <person name="Tu A.H."/>
            <person name="Loraine A.E."/>
        </authorList>
    </citation>
    <scope>NUCLEOTIDE SEQUENCE [LARGE SCALE GENOMIC DNA]</scope>
    <source>
        <strain>158L3-1</strain>
    </source>
</reference>
<name>EFP_META1</name>
<organism>
    <name type="scientific">Metamycoplasma arthritidis (strain 158L3-1)</name>
    <name type="common">Mycoplasma arthritidis</name>
    <dbReference type="NCBI Taxonomy" id="243272"/>
    <lineage>
        <taxon>Bacteria</taxon>
        <taxon>Bacillati</taxon>
        <taxon>Mycoplasmatota</taxon>
        <taxon>Mycoplasmoidales</taxon>
        <taxon>Metamycoplasmataceae</taxon>
        <taxon>Metamycoplasma</taxon>
    </lineage>
</organism>
<accession>B3PMC6</accession>
<proteinExistence type="inferred from homology"/>
<feature type="chain" id="PRO_1000096177" description="Elongation factor P">
    <location>
        <begin position="1"/>
        <end position="185"/>
    </location>
</feature>
<gene>
    <name evidence="1" type="primary">efp</name>
    <name type="ordered locus">MARTH_orf281</name>
</gene>
<comment type="function">
    <text evidence="1">Involved in peptide bond synthesis. Stimulates efficient translation and peptide-bond synthesis on native or reconstituted 70S ribosomes in vitro. Probably functions indirectly by altering the affinity of the ribosome for aminoacyl-tRNA, thus increasing their reactivity as acceptors for peptidyl transferase.</text>
</comment>
<comment type="pathway">
    <text evidence="1">Protein biosynthesis; polypeptide chain elongation.</text>
</comment>
<comment type="subcellular location">
    <subcellularLocation>
        <location evidence="1">Cytoplasm</location>
    </subcellularLocation>
</comment>
<comment type="similarity">
    <text evidence="1">Belongs to the elongation factor P family.</text>
</comment>